<dbReference type="EC" id="3.4.19.12"/>
<dbReference type="EMBL" id="EQ963483">
    <property type="protein sequence ID" value="EED47094.1"/>
    <property type="molecule type" value="Genomic_DNA"/>
</dbReference>
<dbReference type="RefSeq" id="XP_002383274.1">
    <property type="nucleotide sequence ID" value="XM_002383233.1"/>
</dbReference>
<dbReference type="SMR" id="B8NSV5"/>
<dbReference type="STRING" id="332952.B8NSV5"/>
<dbReference type="EnsemblFungi" id="EED47094">
    <property type="protein sequence ID" value="EED47094"/>
    <property type="gene ID" value="AFLA_051480"/>
</dbReference>
<dbReference type="VEuPathDB" id="FungiDB:AFLA_011038"/>
<dbReference type="eggNOG" id="KOG1864">
    <property type="taxonomic scope" value="Eukaryota"/>
</dbReference>
<dbReference type="HOGENOM" id="CLU_008279_0_2_1"/>
<dbReference type="OMA" id="CEKKSQR"/>
<dbReference type="GO" id="GO:0005829">
    <property type="term" value="C:cytosol"/>
    <property type="evidence" value="ECO:0007669"/>
    <property type="project" value="TreeGrafter"/>
</dbReference>
<dbReference type="GO" id="GO:0005634">
    <property type="term" value="C:nucleus"/>
    <property type="evidence" value="ECO:0007669"/>
    <property type="project" value="TreeGrafter"/>
</dbReference>
<dbReference type="GO" id="GO:0004843">
    <property type="term" value="F:cysteine-type deubiquitinase activity"/>
    <property type="evidence" value="ECO:0000250"/>
    <property type="project" value="UniProtKB"/>
</dbReference>
<dbReference type="GO" id="GO:0045013">
    <property type="term" value="P:carbon catabolite repression of transcription"/>
    <property type="evidence" value="ECO:0000250"/>
    <property type="project" value="UniProtKB"/>
</dbReference>
<dbReference type="GO" id="GO:0016579">
    <property type="term" value="P:protein deubiquitination"/>
    <property type="evidence" value="ECO:0007669"/>
    <property type="project" value="InterPro"/>
</dbReference>
<dbReference type="GO" id="GO:0006511">
    <property type="term" value="P:ubiquitin-dependent protein catabolic process"/>
    <property type="evidence" value="ECO:0000250"/>
    <property type="project" value="UniProtKB"/>
</dbReference>
<dbReference type="CDD" id="cd02663">
    <property type="entry name" value="Peptidase_C19G"/>
    <property type="match status" value="1"/>
</dbReference>
<dbReference type="FunFam" id="3.90.70.10:FF:000075">
    <property type="entry name" value="Ubiquitin carboxyl-terminal hydrolase creB"/>
    <property type="match status" value="1"/>
</dbReference>
<dbReference type="Gene3D" id="3.90.70.10">
    <property type="entry name" value="Cysteine proteinases"/>
    <property type="match status" value="1"/>
</dbReference>
<dbReference type="InterPro" id="IPR038765">
    <property type="entry name" value="Papain-like_cys_pep_sf"/>
</dbReference>
<dbReference type="InterPro" id="IPR050164">
    <property type="entry name" value="Peptidase_C19"/>
</dbReference>
<dbReference type="InterPro" id="IPR001394">
    <property type="entry name" value="Peptidase_C19_UCH"/>
</dbReference>
<dbReference type="InterPro" id="IPR018200">
    <property type="entry name" value="USP_CS"/>
</dbReference>
<dbReference type="InterPro" id="IPR028889">
    <property type="entry name" value="USP_dom"/>
</dbReference>
<dbReference type="PANTHER" id="PTHR24006:SF733">
    <property type="entry name" value="RE52890P"/>
    <property type="match status" value="1"/>
</dbReference>
<dbReference type="PANTHER" id="PTHR24006">
    <property type="entry name" value="UBIQUITIN CARBOXYL-TERMINAL HYDROLASE"/>
    <property type="match status" value="1"/>
</dbReference>
<dbReference type="Pfam" id="PF00443">
    <property type="entry name" value="UCH"/>
    <property type="match status" value="1"/>
</dbReference>
<dbReference type="SUPFAM" id="SSF54001">
    <property type="entry name" value="Cysteine proteinases"/>
    <property type="match status" value="1"/>
</dbReference>
<dbReference type="PROSITE" id="PS00972">
    <property type="entry name" value="USP_1"/>
    <property type="match status" value="1"/>
</dbReference>
<dbReference type="PROSITE" id="PS00973">
    <property type="entry name" value="USP_2"/>
    <property type="match status" value="1"/>
</dbReference>
<dbReference type="PROSITE" id="PS50235">
    <property type="entry name" value="USP_3"/>
    <property type="match status" value="1"/>
</dbReference>
<reference key="1">
    <citation type="journal article" date="2015" name="Genome Announc.">
        <title>Genome sequence of Aspergillus flavus NRRL 3357, a strain that causes aflatoxin contamination of food and feed.</title>
        <authorList>
            <person name="Nierman W.C."/>
            <person name="Yu J."/>
            <person name="Fedorova-Abrams N.D."/>
            <person name="Losada L."/>
            <person name="Cleveland T.E."/>
            <person name="Bhatnagar D."/>
            <person name="Bennett J.W."/>
            <person name="Dean R."/>
            <person name="Payne G.A."/>
        </authorList>
    </citation>
    <scope>NUCLEOTIDE SEQUENCE [LARGE SCALE GENOMIC DNA]</scope>
    <source>
        <strain>ATCC 200026 / FGSC A1120 / IAM 13836 / NRRL 3357 / JCM 12722 / SRRC 167</strain>
    </source>
</reference>
<protein>
    <recommendedName>
        <fullName>Probable ubiquitin carboxyl-terminal hydrolase creB</fullName>
        <ecNumber>3.4.19.12</ecNumber>
    </recommendedName>
    <alternativeName>
        <fullName>Carbon catabolite repression protein B</fullName>
    </alternativeName>
    <alternativeName>
        <fullName>Deubiquitinating enzyme creB</fullName>
    </alternativeName>
    <alternativeName>
        <fullName>Ubiquitin thioesterase creB</fullName>
    </alternativeName>
    <alternativeName>
        <fullName>Ubiquitin-hydrolyzing enzyme creB</fullName>
    </alternativeName>
    <alternativeName>
        <fullName>Ubiquitin-specific-processing protease creB</fullName>
    </alternativeName>
</protein>
<evidence type="ECO:0000250" key="1"/>
<evidence type="ECO:0000255" key="2"/>
<evidence type="ECO:0000255" key="3">
    <source>
        <dbReference type="PROSITE-ProRule" id="PRU10092"/>
    </source>
</evidence>
<evidence type="ECO:0000255" key="4">
    <source>
        <dbReference type="PROSITE-ProRule" id="PRU10093"/>
    </source>
</evidence>
<evidence type="ECO:0000256" key="5">
    <source>
        <dbReference type="SAM" id="MobiDB-lite"/>
    </source>
</evidence>
<evidence type="ECO:0000305" key="6"/>
<gene>
    <name type="primary">creB</name>
    <name type="ORF">AFLA_051480</name>
</gene>
<sequence>MGSFLRSLRRDVGPPTPSVGATPAKKEPPVPPVTPLEKMLQDMGAIREDGSDKFFGMENYGNTCYCNSILQCLYYSVPFREAVVNYPTRTPIESLEAALANTLRYQNFAANLEAEALAEKQKAANAQRPGAPPNQPQKPEDKDSPEYKKKMALQTLPLLETKNNATSYGMSESLFTSLKDLFESVVASQSRIGIIRPQHFLDVLRREHEMFRTAMHQDAHEFLNLLLNEVVANVEAEASKQPEPERSLPPAESADSTELSGSSGSKTPNTTRWVHELFEGTLTSETQCLTCEKVSQRDEVFLDLSVDLEQHSSVTSCLRKFSAEEMLCERNKFHCDNCGGLQEAEKRMKIKRLPRILALHLKRFKYTEDLQRLQKLFHRVVYPYHLRLFNTTDDAEDPDRLYELYAVVVHIGGGPYHGHYVAIIKTQDRGWLLFDDEMVEPVDKNYVRNFFGDRPGLACAYVLFYQETTLEAVMKEQEQENMDLNTSVADINDSTLKQNGYPLSPGLAHVHSASQIPSPSEPARFSNLQRAPTAPPLFPHPEHADSESSPADPSTTASATPPVPPIPDIHSLPLSPKKSDSHFKKERAKEEKERKANEKEKEKQRRRDQEARIREQRREDAEIRAALEASKASKAEEDRRHSPDDTKKSSHGLSRLKRGSKSFSHRLGKDKENRVSSSSHSATPIAEHPPSRNGASESQQQLPNGQSPGSHGLHTRHTGLDEERDTLKDPKHDRSGHHGKWRSFSLKKKSFSILS</sequence>
<proteinExistence type="inferred from homology"/>
<name>CREB_ASPFN</name>
<organism>
    <name type="scientific">Aspergillus flavus (strain ATCC 200026 / FGSC A1120 / IAM 13836 / NRRL 3357 / JCM 12722 / SRRC 167)</name>
    <dbReference type="NCBI Taxonomy" id="332952"/>
    <lineage>
        <taxon>Eukaryota</taxon>
        <taxon>Fungi</taxon>
        <taxon>Dikarya</taxon>
        <taxon>Ascomycota</taxon>
        <taxon>Pezizomycotina</taxon>
        <taxon>Eurotiomycetes</taxon>
        <taxon>Eurotiomycetidae</taxon>
        <taxon>Eurotiales</taxon>
        <taxon>Aspergillaceae</taxon>
        <taxon>Aspergillus</taxon>
        <taxon>Aspergillus subgen. Circumdati</taxon>
    </lineage>
</organism>
<keyword id="KW-0175">Coiled coil</keyword>
<keyword id="KW-0378">Hydrolase</keyword>
<keyword id="KW-0645">Protease</keyword>
<keyword id="KW-0788">Thiol protease</keyword>
<keyword id="KW-0833">Ubl conjugation pathway</keyword>
<comment type="function">
    <text evidence="1">Ubiquitin thioesterase component of the regulatory network controlling carbon source utilization through ubiquitination and deubiquitination involving creA, creB, creC, creD and acrB. Deubiquitinates the creA catabolic repressor and the quinate permease qutD. Also plays a role in response to carbon starvation and the control of extracellular proteases activity (By similarity).</text>
</comment>
<comment type="catalytic activity">
    <reaction>
        <text>Thiol-dependent hydrolysis of ester, thioester, amide, peptide and isopeptide bonds formed by the C-terminal Gly of ubiquitin (a 76-residue protein attached to proteins as an intracellular targeting signal).</text>
        <dbReference type="EC" id="3.4.19.12"/>
    </reaction>
</comment>
<comment type="subunit">
    <text evidence="1">Interacts with creA, creC and qutD.</text>
</comment>
<comment type="similarity">
    <text evidence="6">Belongs to the peptidase C19 family.</text>
</comment>
<feature type="chain" id="PRO_0000395679" description="Probable ubiquitin carboxyl-terminal hydrolase creB">
    <location>
        <begin position="1"/>
        <end position="755"/>
    </location>
</feature>
<feature type="domain" description="USP">
    <location>
        <begin position="55"/>
        <end position="468"/>
    </location>
</feature>
<feature type="region of interest" description="Disordered" evidence="5">
    <location>
        <begin position="1"/>
        <end position="32"/>
    </location>
</feature>
<feature type="region of interest" description="Disordered" evidence="5">
    <location>
        <begin position="119"/>
        <end position="146"/>
    </location>
</feature>
<feature type="region of interest" description="Disordered" evidence="5">
    <location>
        <begin position="237"/>
        <end position="270"/>
    </location>
</feature>
<feature type="region of interest" description="Disordered" evidence="5">
    <location>
        <begin position="495"/>
        <end position="755"/>
    </location>
</feature>
<feature type="coiled-coil region" evidence="2">
    <location>
        <begin position="581"/>
        <end position="630"/>
    </location>
</feature>
<feature type="compositionally biased region" description="Basic and acidic residues" evidence="5">
    <location>
        <begin position="237"/>
        <end position="246"/>
    </location>
</feature>
<feature type="compositionally biased region" description="Polar residues" evidence="5">
    <location>
        <begin position="254"/>
        <end position="270"/>
    </location>
</feature>
<feature type="compositionally biased region" description="Low complexity" evidence="5">
    <location>
        <begin position="547"/>
        <end position="560"/>
    </location>
</feature>
<feature type="compositionally biased region" description="Basic and acidic residues" evidence="5">
    <location>
        <begin position="577"/>
        <end position="648"/>
    </location>
</feature>
<feature type="compositionally biased region" description="Basic residues" evidence="5">
    <location>
        <begin position="654"/>
        <end position="666"/>
    </location>
</feature>
<feature type="compositionally biased region" description="Polar residues" evidence="5">
    <location>
        <begin position="693"/>
        <end position="709"/>
    </location>
</feature>
<feature type="compositionally biased region" description="Basic and acidic residues" evidence="5">
    <location>
        <begin position="718"/>
        <end position="733"/>
    </location>
</feature>
<feature type="compositionally biased region" description="Basic residues" evidence="5">
    <location>
        <begin position="734"/>
        <end position="755"/>
    </location>
</feature>
<feature type="active site" description="Nucleophile" evidence="3 4">
    <location>
        <position position="64"/>
    </location>
</feature>
<feature type="active site" description="Proton acceptor" evidence="3 4">
    <location>
        <position position="419"/>
    </location>
</feature>
<accession>B8NSV5</accession>